<reference key="1">
    <citation type="submission" date="2009-01" db="EMBL/GenBank/DDBJ databases">
        <title>Complete sequence of Chloroflexus sp. Y-400-fl.</title>
        <authorList>
            <consortium name="US DOE Joint Genome Institute"/>
            <person name="Lucas S."/>
            <person name="Copeland A."/>
            <person name="Lapidus A."/>
            <person name="Glavina del Rio T."/>
            <person name="Dalin E."/>
            <person name="Tice H."/>
            <person name="Bruce D."/>
            <person name="Goodwin L."/>
            <person name="Pitluck S."/>
            <person name="Sims D."/>
            <person name="Kiss H."/>
            <person name="Brettin T."/>
            <person name="Detter J.C."/>
            <person name="Han C."/>
            <person name="Larimer F."/>
            <person name="Land M."/>
            <person name="Hauser L."/>
            <person name="Kyrpides N."/>
            <person name="Ovchinnikova G."/>
            <person name="Bryant D.A."/>
            <person name="Richardson P."/>
        </authorList>
    </citation>
    <scope>NUCLEOTIDE SEQUENCE [LARGE SCALE GENOMIC DNA]</scope>
    <source>
        <strain>ATCC 29364 / DSM 637 / Y-400-fl</strain>
    </source>
</reference>
<dbReference type="EMBL" id="CP001364">
    <property type="protein sequence ID" value="ACM55303.1"/>
    <property type="molecule type" value="Genomic_DNA"/>
</dbReference>
<dbReference type="SMR" id="B9LF86"/>
<dbReference type="KEGG" id="chl:Chy400_3940"/>
<dbReference type="HOGENOM" id="CLU_061534_1_0_0"/>
<dbReference type="OrthoDB" id="9784760at2"/>
<dbReference type="GO" id="GO:0005737">
    <property type="term" value="C:cytoplasm"/>
    <property type="evidence" value="ECO:0007669"/>
    <property type="project" value="UniProtKB-SubCell"/>
</dbReference>
<dbReference type="GO" id="GO:0003677">
    <property type="term" value="F:DNA binding"/>
    <property type="evidence" value="ECO:0007669"/>
    <property type="project" value="UniProtKB-UniRule"/>
</dbReference>
<dbReference type="GO" id="GO:0003700">
    <property type="term" value="F:DNA-binding transcription factor activity"/>
    <property type="evidence" value="ECO:0007669"/>
    <property type="project" value="UniProtKB-UniRule"/>
</dbReference>
<dbReference type="GO" id="GO:0045892">
    <property type="term" value="P:negative regulation of DNA-templated transcription"/>
    <property type="evidence" value="ECO:0007669"/>
    <property type="project" value="InterPro"/>
</dbReference>
<dbReference type="GO" id="GO:0051775">
    <property type="term" value="P:response to redox state"/>
    <property type="evidence" value="ECO:0007669"/>
    <property type="project" value="InterPro"/>
</dbReference>
<dbReference type="Gene3D" id="3.40.50.720">
    <property type="entry name" value="NAD(P)-binding Rossmann-like Domain"/>
    <property type="match status" value="1"/>
</dbReference>
<dbReference type="Gene3D" id="1.10.10.10">
    <property type="entry name" value="Winged helix-like DNA-binding domain superfamily/Winged helix DNA-binding domain"/>
    <property type="match status" value="1"/>
</dbReference>
<dbReference type="HAMAP" id="MF_01131">
    <property type="entry name" value="Rex"/>
    <property type="match status" value="1"/>
</dbReference>
<dbReference type="InterPro" id="IPR003781">
    <property type="entry name" value="CoA-bd"/>
</dbReference>
<dbReference type="InterPro" id="IPR036291">
    <property type="entry name" value="NAD(P)-bd_dom_sf"/>
</dbReference>
<dbReference type="InterPro" id="IPR009718">
    <property type="entry name" value="Rex_DNA-bd_C_dom"/>
</dbReference>
<dbReference type="InterPro" id="IPR022876">
    <property type="entry name" value="Tscrpt_rep_Rex"/>
</dbReference>
<dbReference type="InterPro" id="IPR036388">
    <property type="entry name" value="WH-like_DNA-bd_sf"/>
</dbReference>
<dbReference type="InterPro" id="IPR036390">
    <property type="entry name" value="WH_DNA-bd_sf"/>
</dbReference>
<dbReference type="NCBIfam" id="NF003989">
    <property type="entry name" value="PRK05472.1-3"/>
    <property type="match status" value="1"/>
</dbReference>
<dbReference type="NCBIfam" id="NF003992">
    <property type="entry name" value="PRK05472.2-1"/>
    <property type="match status" value="1"/>
</dbReference>
<dbReference type="NCBIfam" id="NF003993">
    <property type="entry name" value="PRK05472.2-2"/>
    <property type="match status" value="1"/>
</dbReference>
<dbReference type="NCBIfam" id="NF003994">
    <property type="entry name" value="PRK05472.2-3"/>
    <property type="match status" value="1"/>
</dbReference>
<dbReference type="NCBIfam" id="NF003995">
    <property type="entry name" value="PRK05472.2-4"/>
    <property type="match status" value="1"/>
</dbReference>
<dbReference type="NCBIfam" id="NF003996">
    <property type="entry name" value="PRK05472.2-5"/>
    <property type="match status" value="1"/>
</dbReference>
<dbReference type="PANTHER" id="PTHR35786">
    <property type="entry name" value="REDOX-SENSING TRANSCRIPTIONAL REPRESSOR REX"/>
    <property type="match status" value="1"/>
</dbReference>
<dbReference type="PANTHER" id="PTHR35786:SF1">
    <property type="entry name" value="REDOX-SENSING TRANSCRIPTIONAL REPRESSOR REX 1"/>
    <property type="match status" value="1"/>
</dbReference>
<dbReference type="Pfam" id="PF02629">
    <property type="entry name" value="CoA_binding"/>
    <property type="match status" value="1"/>
</dbReference>
<dbReference type="Pfam" id="PF06971">
    <property type="entry name" value="Put_DNA-bind_N"/>
    <property type="match status" value="1"/>
</dbReference>
<dbReference type="SMART" id="SM00881">
    <property type="entry name" value="CoA_binding"/>
    <property type="match status" value="1"/>
</dbReference>
<dbReference type="SUPFAM" id="SSF51735">
    <property type="entry name" value="NAD(P)-binding Rossmann-fold domains"/>
    <property type="match status" value="1"/>
</dbReference>
<dbReference type="SUPFAM" id="SSF46785">
    <property type="entry name" value="Winged helix' DNA-binding domain"/>
    <property type="match status" value="1"/>
</dbReference>
<gene>
    <name evidence="1" type="primary">rex</name>
    <name type="ordered locus">Chy400_3940</name>
</gene>
<protein>
    <recommendedName>
        <fullName evidence="1">Redox-sensing transcriptional repressor Rex</fullName>
    </recommendedName>
</protein>
<keyword id="KW-0963">Cytoplasm</keyword>
<keyword id="KW-0238">DNA-binding</keyword>
<keyword id="KW-0520">NAD</keyword>
<keyword id="KW-0678">Repressor</keyword>
<keyword id="KW-0804">Transcription</keyword>
<keyword id="KW-0805">Transcription regulation</keyword>
<feature type="chain" id="PRO_1000164081" description="Redox-sensing transcriptional repressor Rex">
    <location>
        <begin position="1"/>
        <end position="212"/>
    </location>
</feature>
<feature type="DNA-binding region" description="H-T-H motif" evidence="1">
    <location>
        <begin position="17"/>
        <end position="56"/>
    </location>
</feature>
<feature type="binding site" evidence="1">
    <location>
        <begin position="91"/>
        <end position="96"/>
    </location>
    <ligand>
        <name>NAD(+)</name>
        <dbReference type="ChEBI" id="CHEBI:57540"/>
    </ligand>
</feature>
<name>REX_CHLSY</name>
<organism>
    <name type="scientific">Chloroflexus aurantiacus (strain ATCC 29364 / DSM 637 / Y-400-fl)</name>
    <dbReference type="NCBI Taxonomy" id="480224"/>
    <lineage>
        <taxon>Bacteria</taxon>
        <taxon>Bacillati</taxon>
        <taxon>Chloroflexota</taxon>
        <taxon>Chloroflexia</taxon>
        <taxon>Chloroflexales</taxon>
        <taxon>Chloroflexineae</taxon>
        <taxon>Chloroflexaceae</taxon>
        <taxon>Chloroflexus</taxon>
    </lineage>
</organism>
<evidence type="ECO:0000255" key="1">
    <source>
        <dbReference type="HAMAP-Rule" id="MF_01131"/>
    </source>
</evidence>
<accession>B9LF86</accession>
<sequence>MERSDLPPDVVIRRLPLYARSLRYLLEEGVHSVSSQELGERINVTAAQIRKDLSYFGEFGKQGIGYDVEKLLQHIERILGLHHHWPVALVGIGLLGQAIARYEGFRTEGIEIVALFDSDPAKIGQKIGDLTIQDFAHVRRIIAEKQIKMAIIAVPAQQAQRVADVLVEAGIRAILSYAPMILQVPEDVWVRYIDPVAVLQSMTYYLAREQEH</sequence>
<proteinExistence type="inferred from homology"/>
<comment type="function">
    <text evidence="1">Modulates transcription in response to changes in cellular NADH/NAD(+) redox state.</text>
</comment>
<comment type="subunit">
    <text evidence="1">Homodimer.</text>
</comment>
<comment type="subcellular location">
    <subcellularLocation>
        <location evidence="1">Cytoplasm</location>
    </subcellularLocation>
</comment>
<comment type="similarity">
    <text evidence="1">Belongs to the transcriptional regulatory Rex family.</text>
</comment>